<feature type="chain" id="PRO_0000135660" description="Pyridoxal 5'-phosphate synthase subunit PdxT">
    <location>
        <begin position="1"/>
        <end position="186"/>
    </location>
</feature>
<feature type="active site" description="Nucleophile" evidence="1">
    <location>
        <position position="75"/>
    </location>
</feature>
<feature type="active site" description="Charge relay system" evidence="1">
    <location>
        <position position="165"/>
    </location>
</feature>
<feature type="active site" description="Charge relay system" evidence="1">
    <location>
        <position position="167"/>
    </location>
</feature>
<feature type="binding site" evidence="1">
    <location>
        <begin position="46"/>
        <end position="48"/>
    </location>
    <ligand>
        <name>L-glutamine</name>
        <dbReference type="ChEBI" id="CHEBI:58359"/>
    </ligand>
</feature>
<feature type="binding site" evidence="1">
    <location>
        <position position="101"/>
    </location>
    <ligand>
        <name>L-glutamine</name>
        <dbReference type="ChEBI" id="CHEBI:58359"/>
    </ligand>
</feature>
<feature type="binding site" evidence="1">
    <location>
        <begin position="129"/>
        <end position="130"/>
    </location>
    <ligand>
        <name>L-glutamine</name>
        <dbReference type="ChEBI" id="CHEBI:58359"/>
    </ligand>
</feature>
<organism>
    <name type="scientific">Staphylococcus aureus (strain MW2)</name>
    <dbReference type="NCBI Taxonomy" id="196620"/>
    <lineage>
        <taxon>Bacteria</taxon>
        <taxon>Bacillati</taxon>
        <taxon>Bacillota</taxon>
        <taxon>Bacilli</taxon>
        <taxon>Bacillales</taxon>
        <taxon>Staphylococcaceae</taxon>
        <taxon>Staphylococcus</taxon>
    </lineage>
</organism>
<protein>
    <recommendedName>
        <fullName evidence="1">Pyridoxal 5'-phosphate synthase subunit PdxT</fullName>
        <ecNumber evidence="1">4.3.3.6</ecNumber>
    </recommendedName>
    <alternativeName>
        <fullName evidence="1">Pdx2</fullName>
    </alternativeName>
    <alternativeName>
        <fullName evidence="1">Pyridoxal 5'-phosphate synthase glutaminase subunit</fullName>
        <ecNumber evidence="1">3.5.1.2</ecNumber>
    </alternativeName>
</protein>
<comment type="function">
    <text evidence="1">Catalyzes the hydrolysis of glutamine to glutamate and ammonia as part of the biosynthesis of pyridoxal 5'-phosphate. The resulting ammonia molecule is channeled to the active site of PdxS.</text>
</comment>
<comment type="catalytic activity">
    <reaction evidence="1">
        <text>aldehydo-D-ribose 5-phosphate + D-glyceraldehyde 3-phosphate + L-glutamine = pyridoxal 5'-phosphate + L-glutamate + phosphate + 3 H2O + H(+)</text>
        <dbReference type="Rhea" id="RHEA:31507"/>
        <dbReference type="ChEBI" id="CHEBI:15377"/>
        <dbReference type="ChEBI" id="CHEBI:15378"/>
        <dbReference type="ChEBI" id="CHEBI:29985"/>
        <dbReference type="ChEBI" id="CHEBI:43474"/>
        <dbReference type="ChEBI" id="CHEBI:58273"/>
        <dbReference type="ChEBI" id="CHEBI:58359"/>
        <dbReference type="ChEBI" id="CHEBI:59776"/>
        <dbReference type="ChEBI" id="CHEBI:597326"/>
        <dbReference type="EC" id="4.3.3.6"/>
    </reaction>
</comment>
<comment type="catalytic activity">
    <reaction evidence="1">
        <text>L-glutamine + H2O = L-glutamate + NH4(+)</text>
        <dbReference type="Rhea" id="RHEA:15889"/>
        <dbReference type="ChEBI" id="CHEBI:15377"/>
        <dbReference type="ChEBI" id="CHEBI:28938"/>
        <dbReference type="ChEBI" id="CHEBI:29985"/>
        <dbReference type="ChEBI" id="CHEBI:58359"/>
        <dbReference type="EC" id="3.5.1.2"/>
    </reaction>
</comment>
<comment type="pathway">
    <text evidence="1">Cofactor biosynthesis; pyridoxal 5'-phosphate biosynthesis.</text>
</comment>
<comment type="subunit">
    <text evidence="1">In the presence of PdxS, forms a dodecamer of heterodimers. Only shows activity in the heterodimer.</text>
</comment>
<comment type="similarity">
    <text evidence="1">Belongs to the glutaminase PdxT/SNO family.</text>
</comment>
<keyword id="KW-0315">Glutamine amidotransferase</keyword>
<keyword id="KW-0378">Hydrolase</keyword>
<keyword id="KW-0456">Lyase</keyword>
<keyword id="KW-0663">Pyridoxal phosphate</keyword>
<gene>
    <name evidence="1" type="primary">pdxT</name>
    <name type="ordered locus">MW0475</name>
</gene>
<evidence type="ECO:0000255" key="1">
    <source>
        <dbReference type="HAMAP-Rule" id="MF_01615"/>
    </source>
</evidence>
<name>PDXT_STAAW</name>
<proteinExistence type="inferred from homology"/>
<dbReference type="EC" id="4.3.3.6" evidence="1"/>
<dbReference type="EC" id="3.5.1.2" evidence="1"/>
<dbReference type="EMBL" id="BA000033">
    <property type="protein sequence ID" value="BAB94340.1"/>
    <property type="molecule type" value="Genomic_DNA"/>
</dbReference>
<dbReference type="RefSeq" id="WP_000690439.1">
    <property type="nucleotide sequence ID" value="NC_003923.1"/>
</dbReference>
<dbReference type="SMR" id="Q7A1R6"/>
<dbReference type="KEGG" id="sam:MW0475"/>
<dbReference type="HOGENOM" id="CLU_069674_2_0_9"/>
<dbReference type="UniPathway" id="UPA00245"/>
<dbReference type="GO" id="GO:0005829">
    <property type="term" value="C:cytosol"/>
    <property type="evidence" value="ECO:0007669"/>
    <property type="project" value="TreeGrafter"/>
</dbReference>
<dbReference type="GO" id="GO:1903600">
    <property type="term" value="C:glutaminase complex"/>
    <property type="evidence" value="ECO:0007669"/>
    <property type="project" value="TreeGrafter"/>
</dbReference>
<dbReference type="GO" id="GO:0004359">
    <property type="term" value="F:glutaminase activity"/>
    <property type="evidence" value="ECO:0007669"/>
    <property type="project" value="UniProtKB-UniRule"/>
</dbReference>
<dbReference type="GO" id="GO:0036381">
    <property type="term" value="F:pyridoxal 5'-phosphate synthase (glutamine hydrolysing) activity"/>
    <property type="evidence" value="ECO:0007669"/>
    <property type="project" value="UniProtKB-UniRule"/>
</dbReference>
<dbReference type="GO" id="GO:0006543">
    <property type="term" value="P:glutamine catabolic process"/>
    <property type="evidence" value="ECO:0007669"/>
    <property type="project" value="UniProtKB-UniRule"/>
</dbReference>
<dbReference type="GO" id="GO:0042823">
    <property type="term" value="P:pyridoxal phosphate biosynthetic process"/>
    <property type="evidence" value="ECO:0007669"/>
    <property type="project" value="UniProtKB-UniRule"/>
</dbReference>
<dbReference type="GO" id="GO:0008614">
    <property type="term" value="P:pyridoxine metabolic process"/>
    <property type="evidence" value="ECO:0007669"/>
    <property type="project" value="TreeGrafter"/>
</dbReference>
<dbReference type="CDD" id="cd01749">
    <property type="entry name" value="GATase1_PB"/>
    <property type="match status" value="1"/>
</dbReference>
<dbReference type="FunFam" id="3.40.50.880:FF:000010">
    <property type="entry name" value="uncharacterized protein LOC100176842 isoform X2"/>
    <property type="match status" value="1"/>
</dbReference>
<dbReference type="Gene3D" id="3.40.50.880">
    <property type="match status" value="1"/>
</dbReference>
<dbReference type="HAMAP" id="MF_01615">
    <property type="entry name" value="PdxT"/>
    <property type="match status" value="1"/>
</dbReference>
<dbReference type="InterPro" id="IPR029062">
    <property type="entry name" value="Class_I_gatase-like"/>
</dbReference>
<dbReference type="InterPro" id="IPR002161">
    <property type="entry name" value="PdxT/SNO"/>
</dbReference>
<dbReference type="InterPro" id="IPR021196">
    <property type="entry name" value="PdxT/SNO_CS"/>
</dbReference>
<dbReference type="NCBIfam" id="TIGR03800">
    <property type="entry name" value="PLP_synth_Pdx2"/>
    <property type="match status" value="1"/>
</dbReference>
<dbReference type="PANTHER" id="PTHR31559">
    <property type="entry name" value="PYRIDOXAL 5'-PHOSPHATE SYNTHASE SUBUNIT SNO"/>
    <property type="match status" value="1"/>
</dbReference>
<dbReference type="PANTHER" id="PTHR31559:SF0">
    <property type="entry name" value="PYRIDOXAL 5'-PHOSPHATE SYNTHASE SUBUNIT SNO1-RELATED"/>
    <property type="match status" value="1"/>
</dbReference>
<dbReference type="Pfam" id="PF01174">
    <property type="entry name" value="SNO"/>
    <property type="match status" value="1"/>
</dbReference>
<dbReference type="PIRSF" id="PIRSF005639">
    <property type="entry name" value="Glut_amidoT_SNO"/>
    <property type="match status" value="1"/>
</dbReference>
<dbReference type="SUPFAM" id="SSF52317">
    <property type="entry name" value="Class I glutamine amidotransferase-like"/>
    <property type="match status" value="1"/>
</dbReference>
<dbReference type="PROSITE" id="PS01236">
    <property type="entry name" value="PDXT_SNO_1"/>
    <property type="match status" value="1"/>
</dbReference>
<dbReference type="PROSITE" id="PS51130">
    <property type="entry name" value="PDXT_SNO_2"/>
    <property type="match status" value="1"/>
</dbReference>
<accession>Q7A1R6</accession>
<sequence length="186" mass="20630">MKIGVLALQGAVREHIRHIELSGHEGIAVKKVEQLEEIEGLILPGGESTTLRRLMNLYGFKEALQNSTLPMFGTCAGLIVLAQDIVGEEGYLNKLNITVQRNSFGRQVDSFETELDIKGIATDIEGVFIRAPHIEKVGQGVDILCKVNEKIVAVQQGKYLGVSFHPELTDDYRVTDYFINHIVKKA</sequence>
<reference key="1">
    <citation type="journal article" date="2002" name="Lancet">
        <title>Genome and virulence determinants of high virulence community-acquired MRSA.</title>
        <authorList>
            <person name="Baba T."/>
            <person name="Takeuchi F."/>
            <person name="Kuroda M."/>
            <person name="Yuzawa H."/>
            <person name="Aoki K."/>
            <person name="Oguchi A."/>
            <person name="Nagai Y."/>
            <person name="Iwama N."/>
            <person name="Asano K."/>
            <person name="Naimi T."/>
            <person name="Kuroda H."/>
            <person name="Cui L."/>
            <person name="Yamamoto K."/>
            <person name="Hiramatsu K."/>
        </authorList>
    </citation>
    <scope>NUCLEOTIDE SEQUENCE [LARGE SCALE GENOMIC DNA]</scope>
    <source>
        <strain>MW2</strain>
    </source>
</reference>